<sequence length="126" mass="13960">MDKTLKFTESHEWVRDNGDGTVTIGISEHAQEMLGDVVFVELPELEAEIEAGESFSLVESVKAASDIYAPVTGEVVEVNEELSDSPELINEEPYEGGWIVKVKLSDPSELDNLKDAEEYLNSIEED</sequence>
<evidence type="ECO:0000255" key="1">
    <source>
        <dbReference type="HAMAP-Rule" id="MF_00272"/>
    </source>
</evidence>
<evidence type="ECO:0000255" key="2">
    <source>
        <dbReference type="PROSITE-ProRule" id="PRU01066"/>
    </source>
</evidence>
<feature type="chain" id="PRO_0000166266" description="Glycine cleavage system H protein">
    <location>
        <begin position="1"/>
        <end position="126"/>
    </location>
</feature>
<feature type="domain" description="Lipoyl-binding" evidence="2">
    <location>
        <begin position="21"/>
        <end position="103"/>
    </location>
</feature>
<feature type="modified residue" description="N6-lipoyllysine" evidence="1">
    <location>
        <position position="62"/>
    </location>
</feature>
<dbReference type="EMBL" id="BA000038">
    <property type="protein sequence ID" value="BAC96718.1"/>
    <property type="molecule type" value="Genomic_DNA"/>
</dbReference>
<dbReference type="RefSeq" id="WP_011081167.1">
    <property type="nucleotide sequence ID" value="NC_005140.1"/>
</dbReference>
<dbReference type="SMR" id="Q7MEH8"/>
<dbReference type="STRING" id="672.VV93_v1c36910"/>
<dbReference type="GeneID" id="93898120"/>
<dbReference type="KEGG" id="vvy:VVA0692"/>
<dbReference type="eggNOG" id="COG0509">
    <property type="taxonomic scope" value="Bacteria"/>
</dbReference>
<dbReference type="HOGENOM" id="CLU_097408_2_0_6"/>
<dbReference type="Proteomes" id="UP000002675">
    <property type="component" value="Chromosome II"/>
</dbReference>
<dbReference type="GO" id="GO:0005829">
    <property type="term" value="C:cytosol"/>
    <property type="evidence" value="ECO:0007669"/>
    <property type="project" value="TreeGrafter"/>
</dbReference>
<dbReference type="GO" id="GO:0005960">
    <property type="term" value="C:glycine cleavage complex"/>
    <property type="evidence" value="ECO:0007669"/>
    <property type="project" value="InterPro"/>
</dbReference>
<dbReference type="GO" id="GO:0019464">
    <property type="term" value="P:glycine decarboxylation via glycine cleavage system"/>
    <property type="evidence" value="ECO:0007669"/>
    <property type="project" value="UniProtKB-UniRule"/>
</dbReference>
<dbReference type="CDD" id="cd06848">
    <property type="entry name" value="GCS_H"/>
    <property type="match status" value="1"/>
</dbReference>
<dbReference type="FunFam" id="2.40.50.100:FF:000011">
    <property type="entry name" value="Glycine cleavage system H protein"/>
    <property type="match status" value="1"/>
</dbReference>
<dbReference type="Gene3D" id="2.40.50.100">
    <property type="match status" value="1"/>
</dbReference>
<dbReference type="HAMAP" id="MF_00272">
    <property type="entry name" value="GcvH"/>
    <property type="match status" value="1"/>
</dbReference>
<dbReference type="InterPro" id="IPR000089">
    <property type="entry name" value="Biotin_lipoyl"/>
</dbReference>
<dbReference type="InterPro" id="IPR002930">
    <property type="entry name" value="GCV_H"/>
</dbReference>
<dbReference type="InterPro" id="IPR033753">
    <property type="entry name" value="GCV_H/Fam206"/>
</dbReference>
<dbReference type="InterPro" id="IPR017453">
    <property type="entry name" value="GCV_H_sub"/>
</dbReference>
<dbReference type="InterPro" id="IPR011053">
    <property type="entry name" value="Single_hybrid_motif"/>
</dbReference>
<dbReference type="NCBIfam" id="TIGR00527">
    <property type="entry name" value="gcvH"/>
    <property type="match status" value="1"/>
</dbReference>
<dbReference type="NCBIfam" id="NF002270">
    <property type="entry name" value="PRK01202.1"/>
    <property type="match status" value="1"/>
</dbReference>
<dbReference type="PANTHER" id="PTHR11715">
    <property type="entry name" value="GLYCINE CLEAVAGE SYSTEM H PROTEIN"/>
    <property type="match status" value="1"/>
</dbReference>
<dbReference type="PANTHER" id="PTHR11715:SF3">
    <property type="entry name" value="GLYCINE CLEAVAGE SYSTEM H PROTEIN-RELATED"/>
    <property type="match status" value="1"/>
</dbReference>
<dbReference type="Pfam" id="PF01597">
    <property type="entry name" value="GCV_H"/>
    <property type="match status" value="1"/>
</dbReference>
<dbReference type="SUPFAM" id="SSF51230">
    <property type="entry name" value="Single hybrid motif"/>
    <property type="match status" value="1"/>
</dbReference>
<dbReference type="PROSITE" id="PS50968">
    <property type="entry name" value="BIOTINYL_LIPOYL"/>
    <property type="match status" value="1"/>
</dbReference>
<proteinExistence type="inferred from homology"/>
<keyword id="KW-0450">Lipoyl</keyword>
<organism>
    <name type="scientific">Vibrio vulnificus (strain YJ016)</name>
    <dbReference type="NCBI Taxonomy" id="196600"/>
    <lineage>
        <taxon>Bacteria</taxon>
        <taxon>Pseudomonadati</taxon>
        <taxon>Pseudomonadota</taxon>
        <taxon>Gammaproteobacteria</taxon>
        <taxon>Vibrionales</taxon>
        <taxon>Vibrionaceae</taxon>
        <taxon>Vibrio</taxon>
    </lineage>
</organism>
<reference key="1">
    <citation type="journal article" date="2003" name="Genome Res.">
        <title>Comparative genome analysis of Vibrio vulnificus, a marine pathogen.</title>
        <authorList>
            <person name="Chen C.-Y."/>
            <person name="Wu K.-M."/>
            <person name="Chang Y.-C."/>
            <person name="Chang C.-H."/>
            <person name="Tsai H.-C."/>
            <person name="Liao T.-L."/>
            <person name="Liu Y.-M."/>
            <person name="Chen H.-J."/>
            <person name="Shen A.B.-T."/>
            <person name="Li J.-C."/>
            <person name="Su T.-L."/>
            <person name="Shao C.-P."/>
            <person name="Lee C.-T."/>
            <person name="Hor L.-I."/>
            <person name="Tsai S.-F."/>
        </authorList>
    </citation>
    <scope>NUCLEOTIDE SEQUENCE [LARGE SCALE GENOMIC DNA]</scope>
    <source>
        <strain>YJ016</strain>
    </source>
</reference>
<protein>
    <recommendedName>
        <fullName evidence="1">Glycine cleavage system H protein</fullName>
    </recommendedName>
</protein>
<gene>
    <name evidence="1" type="primary">gcvH</name>
    <name type="ordered locus">VVA0692</name>
</gene>
<comment type="function">
    <text evidence="1">The glycine cleavage system catalyzes the degradation of glycine. The H protein shuttles the methylamine group of glycine from the P protein to the T protein.</text>
</comment>
<comment type="cofactor">
    <cofactor evidence="1">
        <name>(R)-lipoate</name>
        <dbReference type="ChEBI" id="CHEBI:83088"/>
    </cofactor>
    <text evidence="1">Binds 1 lipoyl cofactor covalently.</text>
</comment>
<comment type="subunit">
    <text evidence="1">The glycine cleavage system is composed of four proteins: P, T, L and H.</text>
</comment>
<comment type="similarity">
    <text evidence="1">Belongs to the GcvH family.</text>
</comment>
<accession>Q7MEH8</accession>
<name>GCSH_VIBVY</name>